<reference key="1">
    <citation type="journal article" date="1982" name="J. Biochem.">
        <title>Amino acid sequence of Chlorogloeopsis fritschii ferredoxin: taxonomic and evolutionary aspects.</title>
        <authorList>
            <person name="Takahashi Y."/>
            <person name="Hase T."/>
            <person name="Matsubara H."/>
            <person name="Hutber G.N."/>
            <person name="Rogers L.J."/>
        </authorList>
    </citation>
    <scope>PROTEIN SEQUENCE OF 2-99</scope>
</reference>
<name>FER_CHLFR</name>
<protein>
    <recommendedName>
        <fullName>Ferredoxin</fullName>
    </recommendedName>
</protein>
<keyword id="KW-0001">2Fe-2S</keyword>
<keyword id="KW-0903">Direct protein sequencing</keyword>
<keyword id="KW-0249">Electron transport</keyword>
<keyword id="KW-0408">Iron</keyword>
<keyword id="KW-0411">Iron-sulfur</keyword>
<keyword id="KW-0479">Metal-binding</keyword>
<keyword id="KW-0813">Transport</keyword>
<organism>
    <name type="scientific">Chlorogloeopsis fritschii</name>
    <dbReference type="NCBI Taxonomy" id="1124"/>
    <lineage>
        <taxon>Bacteria</taxon>
        <taxon>Bacillati</taxon>
        <taxon>Cyanobacteriota</taxon>
        <taxon>Cyanophyceae</taxon>
        <taxon>Nostocales</taxon>
        <taxon>Chlorogloeopsidaceae</taxon>
        <taxon>Chlorogloeopsis</taxon>
    </lineage>
</organism>
<sequence>MATYKVTLINDAEGLNQTIEVDDDTYILDAAEEAGLDLPYSCRAGACSTCAGKIKSGTVDQSDQSFLDDDQIEAGYVLTCVAYPTSDCTIETHKEEELY</sequence>
<accession>P00247</accession>
<proteinExistence type="evidence at protein level"/>
<comment type="function">
    <text>Ferredoxins are iron-sulfur proteins that transfer electrons in a wide variety of metabolic reactions.</text>
</comment>
<comment type="cofactor">
    <cofactor>
        <name>[2Fe-2S] cluster</name>
        <dbReference type="ChEBI" id="CHEBI:190135"/>
    </cofactor>
    <text>Binds 1 [2Fe-2S] cluster.</text>
</comment>
<comment type="similarity">
    <text evidence="3">Belongs to the 2Fe2S plant-type ferredoxin family.</text>
</comment>
<feature type="initiator methionine" description="Removed" evidence="2">
    <location>
        <position position="1"/>
    </location>
</feature>
<feature type="chain" id="PRO_0000189313" description="Ferredoxin">
    <location>
        <begin position="2"/>
        <end position="99"/>
    </location>
</feature>
<feature type="domain" description="2Fe-2S ferredoxin-type" evidence="1">
    <location>
        <begin position="4"/>
        <end position="96"/>
    </location>
</feature>
<feature type="binding site" evidence="1">
    <location>
        <position position="42"/>
    </location>
    <ligand>
        <name>[2Fe-2S] cluster</name>
        <dbReference type="ChEBI" id="CHEBI:190135"/>
    </ligand>
</feature>
<feature type="binding site" evidence="1">
    <location>
        <position position="47"/>
    </location>
    <ligand>
        <name>[2Fe-2S] cluster</name>
        <dbReference type="ChEBI" id="CHEBI:190135"/>
    </ligand>
</feature>
<feature type="binding site" evidence="1">
    <location>
        <position position="50"/>
    </location>
    <ligand>
        <name>[2Fe-2S] cluster</name>
        <dbReference type="ChEBI" id="CHEBI:190135"/>
    </ligand>
</feature>
<feature type="binding site" evidence="1">
    <location>
        <position position="80"/>
    </location>
    <ligand>
        <name>[2Fe-2S] cluster</name>
        <dbReference type="ChEBI" id="CHEBI:190135"/>
    </ligand>
</feature>
<evidence type="ECO:0000255" key="1">
    <source>
        <dbReference type="PROSITE-ProRule" id="PRU00465"/>
    </source>
</evidence>
<evidence type="ECO:0000269" key="2">
    <source>
    </source>
</evidence>
<evidence type="ECO:0000305" key="3"/>
<dbReference type="PIR" id="A00251">
    <property type="entry name" value="FEEF"/>
</dbReference>
<dbReference type="SMR" id="P00247"/>
<dbReference type="GO" id="GO:0051537">
    <property type="term" value="F:2 iron, 2 sulfur cluster binding"/>
    <property type="evidence" value="ECO:0007669"/>
    <property type="project" value="UniProtKB-KW"/>
</dbReference>
<dbReference type="GO" id="GO:0009055">
    <property type="term" value="F:electron transfer activity"/>
    <property type="evidence" value="ECO:0007669"/>
    <property type="project" value="InterPro"/>
</dbReference>
<dbReference type="GO" id="GO:0046872">
    <property type="term" value="F:metal ion binding"/>
    <property type="evidence" value="ECO:0007669"/>
    <property type="project" value="UniProtKB-KW"/>
</dbReference>
<dbReference type="GO" id="GO:0022900">
    <property type="term" value="P:electron transport chain"/>
    <property type="evidence" value="ECO:0007669"/>
    <property type="project" value="InterPro"/>
</dbReference>
<dbReference type="CDD" id="cd00207">
    <property type="entry name" value="fer2"/>
    <property type="match status" value="1"/>
</dbReference>
<dbReference type="FunFam" id="3.10.20.30:FF:000014">
    <property type="entry name" value="Ferredoxin"/>
    <property type="match status" value="1"/>
</dbReference>
<dbReference type="Gene3D" id="3.10.20.30">
    <property type="match status" value="1"/>
</dbReference>
<dbReference type="InterPro" id="IPR036010">
    <property type="entry name" value="2Fe-2S_ferredoxin-like_sf"/>
</dbReference>
<dbReference type="InterPro" id="IPR001041">
    <property type="entry name" value="2Fe-2S_ferredoxin-type"/>
</dbReference>
<dbReference type="InterPro" id="IPR006058">
    <property type="entry name" value="2Fe2S_fd_BS"/>
</dbReference>
<dbReference type="InterPro" id="IPR012675">
    <property type="entry name" value="Beta-grasp_dom_sf"/>
</dbReference>
<dbReference type="InterPro" id="IPR010241">
    <property type="entry name" value="Fd_pln"/>
</dbReference>
<dbReference type="NCBIfam" id="TIGR02008">
    <property type="entry name" value="fdx_plant"/>
    <property type="match status" value="1"/>
</dbReference>
<dbReference type="PANTHER" id="PTHR43112">
    <property type="entry name" value="FERREDOXIN"/>
    <property type="match status" value="1"/>
</dbReference>
<dbReference type="PANTHER" id="PTHR43112:SF3">
    <property type="entry name" value="FERREDOXIN-2, CHLOROPLASTIC"/>
    <property type="match status" value="1"/>
</dbReference>
<dbReference type="Pfam" id="PF00111">
    <property type="entry name" value="Fer2"/>
    <property type="match status" value="1"/>
</dbReference>
<dbReference type="SUPFAM" id="SSF54292">
    <property type="entry name" value="2Fe-2S ferredoxin-like"/>
    <property type="match status" value="1"/>
</dbReference>
<dbReference type="PROSITE" id="PS00197">
    <property type="entry name" value="2FE2S_FER_1"/>
    <property type="match status" value="1"/>
</dbReference>
<dbReference type="PROSITE" id="PS51085">
    <property type="entry name" value="2FE2S_FER_2"/>
    <property type="match status" value="1"/>
</dbReference>